<gene>
    <name type="primary">nolO</name>
    <name type="ordered locus">blr2034</name>
</gene>
<organism>
    <name type="scientific">Bradyrhizobium diazoefficiens (strain JCM 10833 / BCRC 13528 / IAM 13628 / NBRC 14792 / USDA 110)</name>
    <dbReference type="NCBI Taxonomy" id="224911"/>
    <lineage>
        <taxon>Bacteria</taxon>
        <taxon>Pseudomonadati</taxon>
        <taxon>Pseudomonadota</taxon>
        <taxon>Alphaproteobacteria</taxon>
        <taxon>Hyphomicrobiales</taxon>
        <taxon>Nitrobacteraceae</taxon>
        <taxon>Bradyrhizobium</taxon>
    </lineage>
</organism>
<dbReference type="EC" id="2.1.3.-"/>
<dbReference type="EMBL" id="L22756">
    <property type="protein sequence ID" value="AAB58811.1"/>
    <property type="status" value="ALT_SEQ"/>
    <property type="molecule type" value="Genomic_DNA"/>
</dbReference>
<dbReference type="EMBL" id="AH010242">
    <property type="protein sequence ID" value="AAG61005.1"/>
    <property type="molecule type" value="Genomic_DNA"/>
</dbReference>
<dbReference type="EMBL" id="BA000040">
    <property type="protein sequence ID" value="BAC47299.1"/>
    <property type="molecule type" value="Genomic_DNA"/>
</dbReference>
<dbReference type="PIR" id="C49300">
    <property type="entry name" value="C49300"/>
</dbReference>
<dbReference type="RefSeq" id="NP_768674.1">
    <property type="nucleotide sequence ID" value="NC_004463.1"/>
</dbReference>
<dbReference type="SMR" id="Q45269"/>
<dbReference type="STRING" id="224911.AAV28_07005"/>
<dbReference type="EnsemblBacteria" id="BAC47299">
    <property type="protein sequence ID" value="BAC47299"/>
    <property type="gene ID" value="BAC47299"/>
</dbReference>
<dbReference type="KEGG" id="bja:blr2034"/>
<dbReference type="PATRIC" id="fig|224911.44.peg.1535"/>
<dbReference type="eggNOG" id="COG2192">
    <property type="taxonomic scope" value="Bacteria"/>
</dbReference>
<dbReference type="HOGENOM" id="CLU_014411_2_0_5"/>
<dbReference type="InParanoid" id="Q45269"/>
<dbReference type="OrthoDB" id="9780777at2"/>
<dbReference type="PhylomeDB" id="Q45269"/>
<dbReference type="Proteomes" id="UP000002526">
    <property type="component" value="Chromosome"/>
</dbReference>
<dbReference type="GO" id="GO:0016740">
    <property type="term" value="F:transferase activity"/>
    <property type="evidence" value="ECO:0007669"/>
    <property type="project" value="UniProtKB-KW"/>
</dbReference>
<dbReference type="GO" id="GO:0009058">
    <property type="term" value="P:biosynthetic process"/>
    <property type="evidence" value="ECO:0007669"/>
    <property type="project" value="InterPro"/>
</dbReference>
<dbReference type="Gene3D" id="3.30.420.40">
    <property type="match status" value="1"/>
</dbReference>
<dbReference type="Gene3D" id="3.90.870.20">
    <property type="entry name" value="Carbamoyltransferase, C-terminal domain"/>
    <property type="match status" value="1"/>
</dbReference>
<dbReference type="InterPro" id="IPR043129">
    <property type="entry name" value="ATPase_NBD"/>
</dbReference>
<dbReference type="InterPro" id="IPR031730">
    <property type="entry name" value="Carbam_trans_C"/>
</dbReference>
<dbReference type="InterPro" id="IPR038152">
    <property type="entry name" value="Carbam_trans_C_sf"/>
</dbReference>
<dbReference type="InterPro" id="IPR003696">
    <property type="entry name" value="Carbtransf_dom"/>
</dbReference>
<dbReference type="InterPro" id="IPR051338">
    <property type="entry name" value="NodU/CmcH_Carbamoyltrnsfr"/>
</dbReference>
<dbReference type="PANTHER" id="PTHR34847">
    <property type="entry name" value="NODULATION PROTEIN U"/>
    <property type="match status" value="1"/>
</dbReference>
<dbReference type="PANTHER" id="PTHR34847:SF1">
    <property type="entry name" value="NODULATION PROTEIN U"/>
    <property type="match status" value="1"/>
</dbReference>
<dbReference type="Pfam" id="PF16861">
    <property type="entry name" value="Carbam_trans_C"/>
    <property type="match status" value="1"/>
</dbReference>
<dbReference type="Pfam" id="PF02543">
    <property type="entry name" value="Carbam_trans_N"/>
    <property type="match status" value="1"/>
</dbReference>
<dbReference type="SUPFAM" id="SSF53067">
    <property type="entry name" value="Actin-like ATPase domain"/>
    <property type="match status" value="1"/>
</dbReference>
<keyword id="KW-0536">Nodulation</keyword>
<keyword id="KW-1185">Reference proteome</keyword>
<keyword id="KW-0808">Transferase</keyword>
<accession>Q45269</accession>
<accession>Q9AMY5</accession>
<protein>
    <recommendedName>
        <fullName>Nodulation protein NolO</fullName>
        <ecNumber>2.1.3.-</ecNumber>
    </recommendedName>
</protein>
<name>NOLO_BRADU</name>
<reference key="1">
    <citation type="journal article" date="1993" name="J. Biol. Chem.">
        <title>nolMNO genes of Bradyrhizobium japonicum are co-transcribed with nodYABCSUIJ, and nolO is involved in the synthesis of the lipo-oligosaccharide nodulation signals.</title>
        <authorList>
            <person name="Luka S."/>
            <person name="Sanjuan J."/>
            <person name="Carlson R.W."/>
            <person name="Stacey G."/>
        </authorList>
    </citation>
    <scope>NUCLEOTIDE SEQUENCE [GENOMIC DNA]</scope>
    <source>
        <strain>JCM 10833 / BCRC 13528 / IAM 13628 / NBRC 14792 / USDA 110</strain>
    </source>
</reference>
<reference key="2">
    <citation type="journal article" date="2001" name="J. Bacteriol.">
        <title>Potential symbiosis-specific genes uncovered by sequencing a 410-kb DNA region of the Bradyrhizobium japonicum chromosome.</title>
        <authorList>
            <person name="Goettfert M."/>
            <person name="Roethlisberger S."/>
            <person name="Kuendig C."/>
            <person name="Beck C."/>
            <person name="Marty R."/>
            <person name="Hennecke H."/>
        </authorList>
    </citation>
    <scope>NUCLEOTIDE SEQUENCE [GENOMIC DNA]</scope>
    <source>
        <strain>USDA 110spc4</strain>
    </source>
</reference>
<reference key="3">
    <citation type="journal article" date="2002" name="DNA Res.">
        <title>Complete genomic sequence of nitrogen-fixing symbiotic bacterium Bradyrhizobium japonicum USDA110.</title>
        <authorList>
            <person name="Kaneko T."/>
            <person name="Nakamura Y."/>
            <person name="Sato S."/>
            <person name="Minamisawa K."/>
            <person name="Uchiumi T."/>
            <person name="Sasamoto S."/>
            <person name="Watanabe A."/>
            <person name="Idesawa K."/>
            <person name="Iriguchi M."/>
            <person name="Kawashima K."/>
            <person name="Kohara M."/>
            <person name="Matsumoto M."/>
            <person name="Shimpo S."/>
            <person name="Tsuruoka H."/>
            <person name="Wada T."/>
            <person name="Yamada M."/>
            <person name="Tabata S."/>
        </authorList>
    </citation>
    <scope>NUCLEOTIDE SEQUENCE [LARGE SCALE GENOMIC DNA]</scope>
    <source>
        <strain>JCM 10833 / BCRC 13528 / IAM 13628 / NBRC 14792 / USDA 110</strain>
    </source>
</reference>
<feature type="chain" id="PRO_0000207852" description="Nodulation protein NolO">
    <location>
        <begin position="1"/>
        <end position="548"/>
    </location>
</feature>
<feature type="sequence conflict" description="In Ref. 1; AAB58811." evidence="1" ref="1">
    <original>S</original>
    <variation>T</variation>
    <location>
        <position position="310"/>
    </location>
</feature>
<feature type="sequence conflict" description="In Ref. 1." evidence="1" ref="1">
    <original>A</original>
    <variation>G</variation>
    <location>
        <position position="375"/>
    </location>
</feature>
<proteinExistence type="inferred from homology"/>
<comment type="function">
    <text>Involved in 6-O-carbamoylation of Nod-factors.</text>
</comment>
<comment type="similarity">
    <text evidence="1">Belongs to the NodU/CmcH family.</text>
</comment>
<evidence type="ECO:0000305" key="1"/>
<sequence length="548" mass="60647">MNHHEVHAVSAFAMSGFEQSLVFAIDGGGDFLSGLMAVGSGTVIAQLVSFPEHNSLGLFYLETIRYLGCGMFDEYKVMGLAPYGDPDRYRELFAQFYELLDSGGYRVHLDRIGPALLRNIQVRRKGMPFTQQHRDVSASLQEALERIVFHTLRHHRKATGMTRLCLAGGVAHNCTLNGKLLYSGLFDDIFVQPAAHDAGCALGAALMVSSELGRPAPRERLPDVYWGPDLGNEQATELELNAWSGHLDIQRSDDIASSAADWMANGAVIGWVQGRSEFGPRALGNRSILADPRPAENKDRINAVVKKRESYRPFAPSALEEDASEFFELPDGTRQLPFMNFVVRVREAKGNVLGAITHVDGTARLQTVSRKTNPAYWDVINAFKKRTSLPILLNTSFNNNAEPIVQSVSDAITTFLTTDLDGLVVGPFLVRKRPASLQDWSALAASLPPYASLHRVRSHIAPDRQETVCEIRMGHSAHSSMRISPELFEILMRIEGEASLGSLFDTALLDQAKREDLVKELRLVWELRGVRLHPLHAACRHDNVQSGT</sequence>